<organism>
    <name type="scientific">Lemna minor</name>
    <name type="common">Common duckweed</name>
    <dbReference type="NCBI Taxonomy" id="4472"/>
    <lineage>
        <taxon>Eukaryota</taxon>
        <taxon>Viridiplantae</taxon>
        <taxon>Streptophyta</taxon>
        <taxon>Embryophyta</taxon>
        <taxon>Tracheophyta</taxon>
        <taxon>Spermatophyta</taxon>
        <taxon>Magnoliopsida</taxon>
        <taxon>Liliopsida</taxon>
        <taxon>Araceae</taxon>
        <taxon>Lemnoideae</taxon>
        <taxon>Lemna</taxon>
    </lineage>
</organism>
<keyword id="KW-0150">Chloroplast</keyword>
<keyword id="KW-0201">Cytochrome c-type biogenesis</keyword>
<keyword id="KW-0472">Membrane</keyword>
<keyword id="KW-0934">Plastid</keyword>
<keyword id="KW-0793">Thylakoid</keyword>
<keyword id="KW-0812">Transmembrane</keyword>
<keyword id="KW-1133">Transmembrane helix</keyword>
<dbReference type="EMBL" id="DQ400350">
    <property type="protein sequence ID" value="ABD48545.1"/>
    <property type="molecule type" value="Genomic_DNA"/>
</dbReference>
<dbReference type="RefSeq" id="YP_001595558.1">
    <property type="nucleotide sequence ID" value="NC_010109.1"/>
</dbReference>
<dbReference type="SMR" id="A9L9E6"/>
<dbReference type="GeneID" id="5787504"/>
<dbReference type="GO" id="GO:0009535">
    <property type="term" value="C:chloroplast thylakoid membrane"/>
    <property type="evidence" value="ECO:0007669"/>
    <property type="project" value="UniProtKB-SubCell"/>
</dbReference>
<dbReference type="GO" id="GO:0005886">
    <property type="term" value="C:plasma membrane"/>
    <property type="evidence" value="ECO:0007669"/>
    <property type="project" value="TreeGrafter"/>
</dbReference>
<dbReference type="GO" id="GO:0020037">
    <property type="term" value="F:heme binding"/>
    <property type="evidence" value="ECO:0007669"/>
    <property type="project" value="InterPro"/>
</dbReference>
<dbReference type="GO" id="GO:0017004">
    <property type="term" value="P:cytochrome complex assembly"/>
    <property type="evidence" value="ECO:0007669"/>
    <property type="project" value="UniProtKB-UniRule"/>
</dbReference>
<dbReference type="HAMAP" id="MF_01391">
    <property type="entry name" value="CytC_CcsA"/>
    <property type="match status" value="1"/>
</dbReference>
<dbReference type="InterPro" id="IPR002541">
    <property type="entry name" value="Cyt_c_assembly"/>
</dbReference>
<dbReference type="InterPro" id="IPR017562">
    <property type="entry name" value="Cyt_c_biogenesis_CcsA"/>
</dbReference>
<dbReference type="InterPro" id="IPR045062">
    <property type="entry name" value="Cyt_c_biogenesis_CcsA/CcmC"/>
</dbReference>
<dbReference type="NCBIfam" id="TIGR03144">
    <property type="entry name" value="cytochr_II_ccsB"/>
    <property type="match status" value="1"/>
</dbReference>
<dbReference type="PANTHER" id="PTHR30071:SF1">
    <property type="entry name" value="CYTOCHROME B_B6 PROTEIN-RELATED"/>
    <property type="match status" value="1"/>
</dbReference>
<dbReference type="PANTHER" id="PTHR30071">
    <property type="entry name" value="HEME EXPORTER PROTEIN C"/>
    <property type="match status" value="1"/>
</dbReference>
<dbReference type="Pfam" id="PF01578">
    <property type="entry name" value="Cytochrom_C_asm"/>
    <property type="match status" value="1"/>
</dbReference>
<geneLocation type="chloroplast"/>
<accession>A9L9E6</accession>
<evidence type="ECO:0000255" key="1">
    <source>
        <dbReference type="HAMAP-Rule" id="MF_01391"/>
    </source>
</evidence>
<reference key="1">
    <citation type="journal article" date="2008" name="J. Mol. Evol.">
        <title>Complete sequence of the Duckweed (Lemna minor) chloroplast genome: structural organization and phylogenetic relationships to other angiosperms.</title>
        <authorList>
            <person name="Mardanov A.V."/>
            <person name="Ravin N.V."/>
            <person name="Kuznetsov B.B."/>
            <person name="Samigullin T.H."/>
            <person name="Antonov A.S."/>
            <person name="Kolganova T.V."/>
            <person name="Skyabin K.G."/>
        </authorList>
    </citation>
    <scope>NUCLEOTIDE SEQUENCE [LARGE SCALE GENOMIC DNA]</scope>
</reference>
<comment type="function">
    <text evidence="1">Required during biogenesis of c-type cytochromes (cytochrome c6 and cytochrome f) at the step of heme attachment.</text>
</comment>
<comment type="subunit">
    <text evidence="1">May interact with Ccs1.</text>
</comment>
<comment type="subcellular location">
    <subcellularLocation>
        <location evidence="1">Plastid</location>
        <location evidence="1">Chloroplast thylakoid membrane</location>
        <topology evidence="1">Multi-pass membrane protein</topology>
    </subcellularLocation>
</comment>
<comment type="similarity">
    <text evidence="1">Belongs to the CcmF/CycK/Ccl1/NrfE/CcsA family.</text>
</comment>
<gene>
    <name evidence="1" type="primary">ccsA</name>
</gene>
<name>CCSA_LEMMI</name>
<proteinExistence type="inferred from homology"/>
<feature type="chain" id="PRO_0000353763" description="Cytochrome c biogenesis protein CcsA">
    <location>
        <begin position="1"/>
        <end position="324"/>
    </location>
</feature>
<feature type="transmembrane region" description="Helical" evidence="1">
    <location>
        <begin position="17"/>
        <end position="37"/>
    </location>
</feature>
<feature type="transmembrane region" description="Helical" evidence="1">
    <location>
        <begin position="44"/>
        <end position="64"/>
    </location>
</feature>
<feature type="transmembrane region" description="Helical" evidence="1">
    <location>
        <begin position="68"/>
        <end position="88"/>
    </location>
</feature>
<feature type="transmembrane region" description="Helical" evidence="1">
    <location>
        <begin position="99"/>
        <end position="119"/>
    </location>
</feature>
<feature type="transmembrane region" description="Helical" evidence="1">
    <location>
        <begin position="145"/>
        <end position="165"/>
    </location>
</feature>
<feature type="transmembrane region" description="Helical" evidence="1">
    <location>
        <begin position="230"/>
        <end position="250"/>
    </location>
</feature>
<feature type="transmembrane region" description="Helical" evidence="1">
    <location>
        <begin position="264"/>
        <end position="278"/>
    </location>
</feature>
<feature type="transmembrane region" description="Helical" evidence="1">
    <location>
        <begin position="291"/>
        <end position="311"/>
    </location>
</feature>
<sequence>MIFVTLEHILTHISFSIISVVIIIQLMTFFVHEIPALSDSLEKGMIATFLSITGLLIIRWIYSGHFPLSNLYESLMFLSWSFAIIHMIPKIWNHKNKNYLSAITIPSAIFTQAFATSGLSTEMHESGILVPALRSHWLMMHVSMMLLSYAALLVGSLFSIALLVITFRKNGKLVVENQNLLIGSSFFDQMDYLNFNENINVLENPSFSSSFKNYYKYQLVERLDYWSSRVISIGFSFLTIGILSGAVWANEAWGSYWNWDPKETWAFITWTIYAIYSHTRTTKNGQGANSAIVASIGFFIIWICYFGVNLLGIGLHSYGSFILS</sequence>
<protein>
    <recommendedName>
        <fullName evidence="1">Cytochrome c biogenesis protein CcsA</fullName>
    </recommendedName>
</protein>